<protein>
    <recommendedName>
        <fullName evidence="1">Dihydroorotase</fullName>
        <shortName evidence="1">DHOase</shortName>
        <ecNumber evidence="1">3.5.2.3</ecNumber>
    </recommendedName>
</protein>
<evidence type="ECO:0000255" key="1">
    <source>
        <dbReference type="HAMAP-Rule" id="MF_00220"/>
    </source>
</evidence>
<proteinExistence type="inferred from homology"/>
<reference key="1">
    <citation type="submission" date="2005-03" db="EMBL/GenBank/DDBJ databases">
        <title>Brevibacillus brevis strain 47, complete genome.</title>
        <authorList>
            <person name="Hosoyama A."/>
            <person name="Yamada R."/>
            <person name="Hongo Y."/>
            <person name="Terui Y."/>
            <person name="Ankai A."/>
            <person name="Masuyama W."/>
            <person name="Sekiguchi M."/>
            <person name="Takeda T."/>
            <person name="Asano K."/>
            <person name="Ohji S."/>
            <person name="Ichikawa N."/>
            <person name="Narita S."/>
            <person name="Aoki N."/>
            <person name="Miura H."/>
            <person name="Matsushita S."/>
            <person name="Sekigawa T."/>
            <person name="Yamagata H."/>
            <person name="Yoshikawa H."/>
            <person name="Udaka S."/>
            <person name="Tanikawa S."/>
            <person name="Fujita N."/>
        </authorList>
    </citation>
    <scope>NUCLEOTIDE SEQUENCE [LARGE SCALE GENOMIC DNA]</scope>
    <source>
        <strain>47 / JCM 6285 / NBRC 100599</strain>
    </source>
</reference>
<name>PYRC_BREBN</name>
<organism>
    <name type="scientific">Brevibacillus brevis (strain 47 / JCM 6285 / NBRC 100599)</name>
    <dbReference type="NCBI Taxonomy" id="358681"/>
    <lineage>
        <taxon>Bacteria</taxon>
        <taxon>Bacillati</taxon>
        <taxon>Bacillota</taxon>
        <taxon>Bacilli</taxon>
        <taxon>Bacillales</taxon>
        <taxon>Paenibacillaceae</taxon>
        <taxon>Brevibacillus</taxon>
    </lineage>
</organism>
<feature type="chain" id="PRO_1000193096" description="Dihydroorotase">
    <location>
        <begin position="1"/>
        <end position="426"/>
    </location>
</feature>
<feature type="active site" evidence="1">
    <location>
        <position position="306"/>
    </location>
</feature>
<feature type="binding site" evidence="1">
    <location>
        <position position="59"/>
    </location>
    <ligand>
        <name>Zn(2+)</name>
        <dbReference type="ChEBI" id="CHEBI:29105"/>
        <label>1</label>
    </ligand>
</feature>
<feature type="binding site" evidence="1">
    <location>
        <begin position="61"/>
        <end position="63"/>
    </location>
    <ligand>
        <name>substrate</name>
    </ligand>
</feature>
<feature type="binding site" evidence="1">
    <location>
        <position position="61"/>
    </location>
    <ligand>
        <name>Zn(2+)</name>
        <dbReference type="ChEBI" id="CHEBI:29105"/>
        <label>1</label>
    </ligand>
</feature>
<feature type="binding site" evidence="1">
    <location>
        <position position="93"/>
    </location>
    <ligand>
        <name>substrate</name>
    </ligand>
</feature>
<feature type="binding site" evidence="1">
    <location>
        <position position="151"/>
    </location>
    <ligand>
        <name>Zn(2+)</name>
        <dbReference type="ChEBI" id="CHEBI:29105"/>
        <label>1</label>
    </ligand>
</feature>
<feature type="binding site" evidence="1">
    <location>
        <position position="151"/>
    </location>
    <ligand>
        <name>Zn(2+)</name>
        <dbReference type="ChEBI" id="CHEBI:29105"/>
        <label>2</label>
    </ligand>
</feature>
<feature type="binding site" evidence="1">
    <location>
        <position position="178"/>
    </location>
    <ligand>
        <name>Zn(2+)</name>
        <dbReference type="ChEBI" id="CHEBI:29105"/>
        <label>2</label>
    </ligand>
</feature>
<feature type="binding site" evidence="1">
    <location>
        <position position="232"/>
    </location>
    <ligand>
        <name>Zn(2+)</name>
        <dbReference type="ChEBI" id="CHEBI:29105"/>
        <label>2</label>
    </ligand>
</feature>
<feature type="binding site" evidence="1">
    <location>
        <position position="279"/>
    </location>
    <ligand>
        <name>substrate</name>
    </ligand>
</feature>
<feature type="binding site" evidence="1">
    <location>
        <position position="306"/>
    </location>
    <ligand>
        <name>Zn(2+)</name>
        <dbReference type="ChEBI" id="CHEBI:29105"/>
        <label>1</label>
    </ligand>
</feature>
<feature type="binding site" evidence="1">
    <location>
        <position position="310"/>
    </location>
    <ligand>
        <name>substrate</name>
    </ligand>
</feature>
<feature type="binding site" evidence="1">
    <location>
        <begin position="324"/>
        <end position="325"/>
    </location>
    <ligand>
        <name>substrate</name>
    </ligand>
</feature>
<accession>C0ZG41</accession>
<comment type="function">
    <text evidence="1">Catalyzes the reversible cyclization of carbamoyl aspartate to dihydroorotate.</text>
</comment>
<comment type="catalytic activity">
    <reaction evidence="1">
        <text>(S)-dihydroorotate + H2O = N-carbamoyl-L-aspartate + H(+)</text>
        <dbReference type="Rhea" id="RHEA:24296"/>
        <dbReference type="ChEBI" id="CHEBI:15377"/>
        <dbReference type="ChEBI" id="CHEBI:15378"/>
        <dbReference type="ChEBI" id="CHEBI:30864"/>
        <dbReference type="ChEBI" id="CHEBI:32814"/>
        <dbReference type="EC" id="3.5.2.3"/>
    </reaction>
</comment>
<comment type="cofactor">
    <cofactor evidence="1">
        <name>Zn(2+)</name>
        <dbReference type="ChEBI" id="CHEBI:29105"/>
    </cofactor>
    <text evidence="1">Binds 2 Zn(2+) ions per subunit.</text>
</comment>
<comment type="pathway">
    <text evidence="1">Pyrimidine metabolism; UMP biosynthesis via de novo pathway; (S)-dihydroorotate from bicarbonate: step 3/3.</text>
</comment>
<comment type="similarity">
    <text evidence="1">Belongs to the metallo-dependent hydrolases superfamily. DHOase family. Class I DHOase subfamily.</text>
</comment>
<keyword id="KW-0378">Hydrolase</keyword>
<keyword id="KW-0479">Metal-binding</keyword>
<keyword id="KW-0665">Pyrimidine biosynthesis</keyword>
<keyword id="KW-1185">Reference proteome</keyword>
<keyword id="KW-0862">Zinc</keyword>
<gene>
    <name evidence="1" type="primary">pyrC</name>
    <name type="ordered locus">BBR47_37730</name>
</gene>
<dbReference type="EC" id="3.5.2.3" evidence="1"/>
<dbReference type="EMBL" id="AP008955">
    <property type="protein sequence ID" value="BAH44750.1"/>
    <property type="molecule type" value="Genomic_DNA"/>
</dbReference>
<dbReference type="RefSeq" id="WP_015892035.1">
    <property type="nucleotide sequence ID" value="NC_012491.1"/>
</dbReference>
<dbReference type="SMR" id="C0ZG41"/>
<dbReference type="STRING" id="358681.BBR47_37730"/>
<dbReference type="KEGG" id="bbe:BBR47_37730"/>
<dbReference type="eggNOG" id="COG0044">
    <property type="taxonomic scope" value="Bacteria"/>
</dbReference>
<dbReference type="HOGENOM" id="CLU_015572_1_0_9"/>
<dbReference type="UniPathway" id="UPA00070">
    <property type="reaction ID" value="UER00117"/>
</dbReference>
<dbReference type="Proteomes" id="UP000001877">
    <property type="component" value="Chromosome"/>
</dbReference>
<dbReference type="GO" id="GO:0005737">
    <property type="term" value="C:cytoplasm"/>
    <property type="evidence" value="ECO:0007669"/>
    <property type="project" value="TreeGrafter"/>
</dbReference>
<dbReference type="GO" id="GO:0004038">
    <property type="term" value="F:allantoinase activity"/>
    <property type="evidence" value="ECO:0007669"/>
    <property type="project" value="TreeGrafter"/>
</dbReference>
<dbReference type="GO" id="GO:0004151">
    <property type="term" value="F:dihydroorotase activity"/>
    <property type="evidence" value="ECO:0007669"/>
    <property type="project" value="UniProtKB-UniRule"/>
</dbReference>
<dbReference type="GO" id="GO:0008270">
    <property type="term" value="F:zinc ion binding"/>
    <property type="evidence" value="ECO:0007669"/>
    <property type="project" value="UniProtKB-UniRule"/>
</dbReference>
<dbReference type="GO" id="GO:0044205">
    <property type="term" value="P:'de novo' UMP biosynthetic process"/>
    <property type="evidence" value="ECO:0007669"/>
    <property type="project" value="UniProtKB-UniRule"/>
</dbReference>
<dbReference type="GO" id="GO:0006145">
    <property type="term" value="P:purine nucleobase catabolic process"/>
    <property type="evidence" value="ECO:0007669"/>
    <property type="project" value="TreeGrafter"/>
</dbReference>
<dbReference type="CDD" id="cd01317">
    <property type="entry name" value="DHOase_IIa"/>
    <property type="match status" value="1"/>
</dbReference>
<dbReference type="Gene3D" id="3.20.20.140">
    <property type="entry name" value="Metal-dependent hydrolases"/>
    <property type="match status" value="1"/>
</dbReference>
<dbReference type="Gene3D" id="2.30.40.10">
    <property type="entry name" value="Urease, subunit C, domain 1"/>
    <property type="match status" value="1"/>
</dbReference>
<dbReference type="HAMAP" id="MF_00220_B">
    <property type="entry name" value="PyrC_classI_B"/>
    <property type="match status" value="1"/>
</dbReference>
<dbReference type="InterPro" id="IPR006680">
    <property type="entry name" value="Amidohydro-rel"/>
</dbReference>
<dbReference type="InterPro" id="IPR004722">
    <property type="entry name" value="DHOase"/>
</dbReference>
<dbReference type="InterPro" id="IPR050138">
    <property type="entry name" value="DHOase/Allantoinase_Hydrolase"/>
</dbReference>
<dbReference type="InterPro" id="IPR002195">
    <property type="entry name" value="Dihydroorotase_CS"/>
</dbReference>
<dbReference type="InterPro" id="IPR011059">
    <property type="entry name" value="Metal-dep_hydrolase_composite"/>
</dbReference>
<dbReference type="InterPro" id="IPR032466">
    <property type="entry name" value="Metal_Hydrolase"/>
</dbReference>
<dbReference type="NCBIfam" id="NF006837">
    <property type="entry name" value="PRK09357.1-2"/>
    <property type="match status" value="1"/>
</dbReference>
<dbReference type="NCBIfam" id="TIGR00857">
    <property type="entry name" value="pyrC_multi"/>
    <property type="match status" value="1"/>
</dbReference>
<dbReference type="PANTHER" id="PTHR43668">
    <property type="entry name" value="ALLANTOINASE"/>
    <property type="match status" value="1"/>
</dbReference>
<dbReference type="PANTHER" id="PTHR43668:SF2">
    <property type="entry name" value="ALLANTOINASE"/>
    <property type="match status" value="1"/>
</dbReference>
<dbReference type="Pfam" id="PF01979">
    <property type="entry name" value="Amidohydro_1"/>
    <property type="match status" value="1"/>
</dbReference>
<dbReference type="SUPFAM" id="SSF51338">
    <property type="entry name" value="Composite domain of metallo-dependent hydrolases"/>
    <property type="match status" value="1"/>
</dbReference>
<dbReference type="SUPFAM" id="SSF51556">
    <property type="entry name" value="Metallo-dependent hydrolases"/>
    <property type="match status" value="1"/>
</dbReference>
<dbReference type="PROSITE" id="PS00482">
    <property type="entry name" value="DIHYDROOROTASE_1"/>
    <property type="match status" value="1"/>
</dbReference>
<dbReference type="PROSITE" id="PS00483">
    <property type="entry name" value="DIHYDROOROTASE_2"/>
    <property type="match status" value="1"/>
</dbReference>
<sequence length="426" mass="45692">MGIILGNGNVLNQAGELTPMEILVEKGRITAMGETLDRCGHDWIDCHGGMISAGLIDAHVHLREPGFEHKETIETGAKAAVQGGFTTVACMPNTRPSIDSVETVTYILDKASEAGMARVIPYGAITVRQLGKELTDFAGLKEAGIFALTDDGVGVQSTAMMKKAMQKAAELGIAIVAHCEDEDLLIPGAALHDGVVAARHGLPGIPSESESIHVGRDILLAEQTGVHYHVCHISAKESVRLVRDGKRAGVNVTCEVSPHHLLLCDEDIPDNLDTNWKMNPPLRSREDRAALIAGLKDGTIDMIATDHAPHTQEEKANGINRAPFGIVGLETAFPLLYTNLVQTGELTLKKLVELLTVKPAEAFKLPYGRLEVGAPADLTVMDLETEKTIDPSTFASKGINTPFAGWVCKGWPTLTLVDGKIVYQNV</sequence>